<keyword id="KW-0067">ATP-binding</keyword>
<keyword id="KW-0997">Cell inner membrane</keyword>
<keyword id="KW-1003">Cell membrane</keyword>
<keyword id="KW-0472">Membrane</keyword>
<keyword id="KW-0547">Nucleotide-binding</keyword>
<keyword id="KW-0592">Phosphate transport</keyword>
<keyword id="KW-1278">Translocase</keyword>
<keyword id="KW-0813">Transport</keyword>
<name>PSTB_BACFR</name>
<reference key="1">
    <citation type="journal article" date="2004" name="Proc. Natl. Acad. Sci. U.S.A.">
        <title>Genomic analysis of Bacteroides fragilis reveals extensive DNA inversions regulating cell surface adaptation.</title>
        <authorList>
            <person name="Kuwahara T."/>
            <person name="Yamashita A."/>
            <person name="Hirakawa H."/>
            <person name="Nakayama H."/>
            <person name="Toh H."/>
            <person name="Okada N."/>
            <person name="Kuhara S."/>
            <person name="Hattori M."/>
            <person name="Hayashi T."/>
            <person name="Ohnishi Y."/>
        </authorList>
    </citation>
    <scope>NUCLEOTIDE SEQUENCE [LARGE SCALE GENOMIC DNA]</scope>
    <source>
        <strain>YCH46</strain>
    </source>
</reference>
<dbReference type="EC" id="7.3.2.1" evidence="1"/>
<dbReference type="EMBL" id="AP006841">
    <property type="protein sequence ID" value="BAD49504.1"/>
    <property type="molecule type" value="Genomic_DNA"/>
</dbReference>
<dbReference type="RefSeq" id="WP_005788575.1">
    <property type="nucleotide sequence ID" value="NZ_UYXF01000004.1"/>
</dbReference>
<dbReference type="RefSeq" id="YP_100038.1">
    <property type="nucleotide sequence ID" value="NC_006347.1"/>
</dbReference>
<dbReference type="SMR" id="Q64SM5"/>
<dbReference type="STRING" id="295405.BF2754"/>
<dbReference type="GeneID" id="60367953"/>
<dbReference type="KEGG" id="bfr:BF2754"/>
<dbReference type="PATRIC" id="fig|295405.11.peg.2668"/>
<dbReference type="HOGENOM" id="CLU_000604_1_22_10"/>
<dbReference type="OrthoDB" id="9782239at2"/>
<dbReference type="Proteomes" id="UP000002197">
    <property type="component" value="Chromosome"/>
</dbReference>
<dbReference type="GO" id="GO:0005886">
    <property type="term" value="C:plasma membrane"/>
    <property type="evidence" value="ECO:0007669"/>
    <property type="project" value="UniProtKB-SubCell"/>
</dbReference>
<dbReference type="GO" id="GO:0005524">
    <property type="term" value="F:ATP binding"/>
    <property type="evidence" value="ECO:0007669"/>
    <property type="project" value="UniProtKB-KW"/>
</dbReference>
<dbReference type="GO" id="GO:0016887">
    <property type="term" value="F:ATP hydrolysis activity"/>
    <property type="evidence" value="ECO:0007669"/>
    <property type="project" value="InterPro"/>
</dbReference>
<dbReference type="GO" id="GO:0015415">
    <property type="term" value="F:ATPase-coupled phosphate ion transmembrane transporter activity"/>
    <property type="evidence" value="ECO:0007669"/>
    <property type="project" value="UniProtKB-EC"/>
</dbReference>
<dbReference type="GO" id="GO:0035435">
    <property type="term" value="P:phosphate ion transmembrane transport"/>
    <property type="evidence" value="ECO:0007669"/>
    <property type="project" value="InterPro"/>
</dbReference>
<dbReference type="CDD" id="cd03260">
    <property type="entry name" value="ABC_PstB_phosphate_transporter"/>
    <property type="match status" value="1"/>
</dbReference>
<dbReference type="FunFam" id="3.40.50.300:FF:000132">
    <property type="entry name" value="Phosphate import ATP-binding protein PstB"/>
    <property type="match status" value="1"/>
</dbReference>
<dbReference type="Gene3D" id="3.40.50.300">
    <property type="entry name" value="P-loop containing nucleotide triphosphate hydrolases"/>
    <property type="match status" value="1"/>
</dbReference>
<dbReference type="InterPro" id="IPR003593">
    <property type="entry name" value="AAA+_ATPase"/>
</dbReference>
<dbReference type="InterPro" id="IPR003439">
    <property type="entry name" value="ABC_transporter-like_ATP-bd"/>
</dbReference>
<dbReference type="InterPro" id="IPR017871">
    <property type="entry name" value="ABC_transporter-like_CS"/>
</dbReference>
<dbReference type="InterPro" id="IPR027417">
    <property type="entry name" value="P-loop_NTPase"/>
</dbReference>
<dbReference type="InterPro" id="IPR005670">
    <property type="entry name" value="PstB-like"/>
</dbReference>
<dbReference type="NCBIfam" id="TIGR00972">
    <property type="entry name" value="3a0107s01c2"/>
    <property type="match status" value="1"/>
</dbReference>
<dbReference type="PANTHER" id="PTHR43423">
    <property type="entry name" value="ABC TRANSPORTER I FAMILY MEMBER 17"/>
    <property type="match status" value="1"/>
</dbReference>
<dbReference type="PANTHER" id="PTHR43423:SF1">
    <property type="entry name" value="ABC TRANSPORTER I FAMILY MEMBER 17"/>
    <property type="match status" value="1"/>
</dbReference>
<dbReference type="Pfam" id="PF00005">
    <property type="entry name" value="ABC_tran"/>
    <property type="match status" value="1"/>
</dbReference>
<dbReference type="SMART" id="SM00382">
    <property type="entry name" value="AAA"/>
    <property type="match status" value="1"/>
</dbReference>
<dbReference type="SUPFAM" id="SSF52540">
    <property type="entry name" value="P-loop containing nucleoside triphosphate hydrolases"/>
    <property type="match status" value="1"/>
</dbReference>
<dbReference type="PROSITE" id="PS00211">
    <property type="entry name" value="ABC_TRANSPORTER_1"/>
    <property type="match status" value="1"/>
</dbReference>
<dbReference type="PROSITE" id="PS50893">
    <property type="entry name" value="ABC_TRANSPORTER_2"/>
    <property type="match status" value="1"/>
</dbReference>
<dbReference type="PROSITE" id="PS51238">
    <property type="entry name" value="PSTB"/>
    <property type="match status" value="1"/>
</dbReference>
<sequence>MDTTVKIDARDVNFWYGDFHALKGISMEIEEKSVVAFIGPSGCGKSTFLRLFNRMNDLIPATRLTGEIRIDGENIYDKGVQVDELRKNVGMVFQRPNPFPKSIFENVAYGLRVNGVKDNAFIRQRVEETLKGAALWDEVKDKLKESAFALSGGQQQRLCIARAMAVSPSVLLMDEPASALDPISTAKVEELIHELKERYTIVIVTHNMQQAARVSDKTAFFYMGQMVEFGDTKKIFTNPEKEATQNYITGRFG</sequence>
<feature type="chain" id="PRO_0000092775" description="Phosphate import ATP-binding protein PstB">
    <location>
        <begin position="1"/>
        <end position="253"/>
    </location>
</feature>
<feature type="domain" description="ABC transporter" evidence="1">
    <location>
        <begin position="7"/>
        <end position="248"/>
    </location>
</feature>
<feature type="binding site" evidence="1">
    <location>
        <begin position="39"/>
        <end position="46"/>
    </location>
    <ligand>
        <name>ATP</name>
        <dbReference type="ChEBI" id="CHEBI:30616"/>
    </ligand>
</feature>
<gene>
    <name evidence="1" type="primary">pstB</name>
    <name type="ordered locus">BF2754</name>
</gene>
<protein>
    <recommendedName>
        <fullName evidence="1">Phosphate import ATP-binding protein PstB</fullName>
        <ecNumber evidence="1">7.3.2.1</ecNumber>
    </recommendedName>
    <alternativeName>
        <fullName evidence="1">ABC phosphate transporter</fullName>
    </alternativeName>
    <alternativeName>
        <fullName evidence="1">Phosphate-transporting ATPase</fullName>
    </alternativeName>
</protein>
<evidence type="ECO:0000255" key="1">
    <source>
        <dbReference type="HAMAP-Rule" id="MF_01702"/>
    </source>
</evidence>
<comment type="function">
    <text evidence="1">Part of the ABC transporter complex PstSACB involved in phosphate import. Responsible for energy coupling to the transport system.</text>
</comment>
<comment type="catalytic activity">
    <reaction evidence="1">
        <text>phosphate(out) + ATP + H2O = ADP + 2 phosphate(in) + H(+)</text>
        <dbReference type="Rhea" id="RHEA:24440"/>
        <dbReference type="ChEBI" id="CHEBI:15377"/>
        <dbReference type="ChEBI" id="CHEBI:15378"/>
        <dbReference type="ChEBI" id="CHEBI:30616"/>
        <dbReference type="ChEBI" id="CHEBI:43474"/>
        <dbReference type="ChEBI" id="CHEBI:456216"/>
        <dbReference type="EC" id="7.3.2.1"/>
    </reaction>
</comment>
<comment type="subunit">
    <text evidence="1">The complex is composed of two ATP-binding proteins (PstB), two transmembrane proteins (PstC and PstA) and a solute-binding protein (PstS).</text>
</comment>
<comment type="subcellular location">
    <subcellularLocation>
        <location evidence="1">Cell inner membrane</location>
        <topology evidence="1">Peripheral membrane protein</topology>
    </subcellularLocation>
</comment>
<comment type="similarity">
    <text evidence="1">Belongs to the ABC transporter superfamily. Phosphate importer (TC 3.A.1.7) family.</text>
</comment>
<accession>Q64SM5</accession>
<organism>
    <name type="scientific">Bacteroides fragilis (strain YCH46)</name>
    <dbReference type="NCBI Taxonomy" id="295405"/>
    <lineage>
        <taxon>Bacteria</taxon>
        <taxon>Pseudomonadati</taxon>
        <taxon>Bacteroidota</taxon>
        <taxon>Bacteroidia</taxon>
        <taxon>Bacteroidales</taxon>
        <taxon>Bacteroidaceae</taxon>
        <taxon>Bacteroides</taxon>
    </lineage>
</organism>
<proteinExistence type="inferred from homology"/>